<protein>
    <recommendedName>
        <fullName evidence="1">UPF0340 protein SSU05_0314</fullName>
    </recommendedName>
</protein>
<organism>
    <name type="scientific">Streptococcus suis (strain 05ZYH33)</name>
    <dbReference type="NCBI Taxonomy" id="391295"/>
    <lineage>
        <taxon>Bacteria</taxon>
        <taxon>Bacillati</taxon>
        <taxon>Bacillota</taxon>
        <taxon>Bacilli</taxon>
        <taxon>Lactobacillales</taxon>
        <taxon>Streptococcaceae</taxon>
        <taxon>Streptococcus</taxon>
    </lineage>
</organism>
<gene>
    <name type="ordered locus">SSU05_0314</name>
</gene>
<accession>A4VT43</accession>
<reference key="1">
    <citation type="journal article" date="2007" name="PLoS ONE">
        <title>A glimpse of streptococcal toxic shock syndrome from comparative genomics of S. suis 2 Chinese isolates.</title>
        <authorList>
            <person name="Chen C."/>
            <person name="Tang J."/>
            <person name="Dong W."/>
            <person name="Wang C."/>
            <person name="Feng Y."/>
            <person name="Wang J."/>
            <person name="Zheng F."/>
            <person name="Pan X."/>
            <person name="Liu D."/>
            <person name="Li M."/>
            <person name="Song Y."/>
            <person name="Zhu X."/>
            <person name="Sun H."/>
            <person name="Feng T."/>
            <person name="Guo Z."/>
            <person name="Ju A."/>
            <person name="Ge J."/>
            <person name="Dong Y."/>
            <person name="Sun W."/>
            <person name="Jiang Y."/>
            <person name="Wang J."/>
            <person name="Yan J."/>
            <person name="Yang H."/>
            <person name="Wang X."/>
            <person name="Gao G.F."/>
            <person name="Yang R."/>
            <person name="Wang J."/>
            <person name="Yu J."/>
        </authorList>
    </citation>
    <scope>NUCLEOTIDE SEQUENCE [LARGE SCALE GENOMIC DNA]</scope>
    <source>
        <strain>05ZYH33</strain>
    </source>
</reference>
<comment type="similarity">
    <text evidence="1">Belongs to the UPF0340 family.</text>
</comment>
<dbReference type="EMBL" id="CP000407">
    <property type="protein sequence ID" value="ABP89282.1"/>
    <property type="molecule type" value="Genomic_DNA"/>
</dbReference>
<dbReference type="SMR" id="A4VT43"/>
<dbReference type="STRING" id="391295.SSU05_0314"/>
<dbReference type="KEGG" id="ssu:SSU05_0314"/>
<dbReference type="eggNOG" id="COG4475">
    <property type="taxonomic scope" value="Bacteria"/>
</dbReference>
<dbReference type="HOGENOM" id="CLU_106658_0_0_9"/>
<dbReference type="BioCyc" id="SSUI391295:GHI8-344-MONOMER"/>
<dbReference type="Gene3D" id="3.40.50.10360">
    <property type="entry name" value="Hypothetical protein TT1679"/>
    <property type="match status" value="1"/>
</dbReference>
<dbReference type="HAMAP" id="MF_00800">
    <property type="entry name" value="UPF0340"/>
    <property type="match status" value="1"/>
</dbReference>
<dbReference type="InterPro" id="IPR028345">
    <property type="entry name" value="Antibiotic_NAT-like"/>
</dbReference>
<dbReference type="InterPro" id="IPR006340">
    <property type="entry name" value="DUF436"/>
</dbReference>
<dbReference type="NCBIfam" id="TIGR01440">
    <property type="entry name" value="TIGR01440 family protein"/>
    <property type="match status" value="1"/>
</dbReference>
<dbReference type="Pfam" id="PF04260">
    <property type="entry name" value="DUF436"/>
    <property type="match status" value="1"/>
</dbReference>
<dbReference type="PIRSF" id="PIRSF007510">
    <property type="entry name" value="UCP007510"/>
    <property type="match status" value="1"/>
</dbReference>
<dbReference type="SUPFAM" id="SSF110710">
    <property type="entry name" value="TTHA0583/YokD-like"/>
    <property type="match status" value="1"/>
</dbReference>
<evidence type="ECO:0000255" key="1">
    <source>
        <dbReference type="HAMAP-Rule" id="MF_00800"/>
    </source>
</evidence>
<proteinExistence type="inferred from homology"/>
<name>Y314_STRSY</name>
<sequence length="188" mass="20419">MLLREIKDQTKQVVQEVLELSDLQKGQIFVLGLSSSEVIGGHIGKNSSLEVGEVVVETILEILDQKGIYLAVQGCEHLNRALVVERELAIQKDLEIVNVLPTLHAGGSGQLAAFKYMKDPVEVEFITAQAGVDIGDTAIGMHIKHVQVPIRPSLREIGQAHVTALASRPKLIGGVRAAYQEDEIRKGS</sequence>
<feature type="chain" id="PRO_1000046989" description="UPF0340 protein SSU05_0314">
    <location>
        <begin position="1"/>
        <end position="188"/>
    </location>
</feature>